<gene>
    <name evidence="1" type="primary">gloB</name>
    <name type="ordered locus">Mlg_1994</name>
</gene>
<comment type="function">
    <text evidence="1">Thiolesterase that catalyzes the hydrolysis of S-D-lactoyl-glutathione to form glutathione and D-lactic acid.</text>
</comment>
<comment type="catalytic activity">
    <reaction evidence="1">
        <text>an S-(2-hydroxyacyl)glutathione + H2O = a 2-hydroxy carboxylate + glutathione + H(+)</text>
        <dbReference type="Rhea" id="RHEA:21864"/>
        <dbReference type="ChEBI" id="CHEBI:15377"/>
        <dbReference type="ChEBI" id="CHEBI:15378"/>
        <dbReference type="ChEBI" id="CHEBI:57925"/>
        <dbReference type="ChEBI" id="CHEBI:58896"/>
        <dbReference type="ChEBI" id="CHEBI:71261"/>
        <dbReference type="EC" id="3.1.2.6"/>
    </reaction>
</comment>
<comment type="cofactor">
    <cofactor evidence="1">
        <name>Zn(2+)</name>
        <dbReference type="ChEBI" id="CHEBI:29105"/>
    </cofactor>
    <text evidence="1">Binds 2 Zn(2+) ions per subunit.</text>
</comment>
<comment type="pathway">
    <text evidence="1">Secondary metabolite metabolism; methylglyoxal degradation; (R)-lactate from methylglyoxal: step 2/2.</text>
</comment>
<comment type="subunit">
    <text evidence="1">Monomer.</text>
</comment>
<comment type="similarity">
    <text evidence="1">Belongs to the metallo-beta-lactamase superfamily. Glyoxalase II family.</text>
</comment>
<organism>
    <name type="scientific">Alkalilimnicola ehrlichii (strain ATCC BAA-1101 / DSM 17681 / MLHE-1)</name>
    <dbReference type="NCBI Taxonomy" id="187272"/>
    <lineage>
        <taxon>Bacteria</taxon>
        <taxon>Pseudomonadati</taxon>
        <taxon>Pseudomonadota</taxon>
        <taxon>Gammaproteobacteria</taxon>
        <taxon>Chromatiales</taxon>
        <taxon>Ectothiorhodospiraceae</taxon>
        <taxon>Alkalilimnicola</taxon>
    </lineage>
</organism>
<dbReference type="EC" id="3.1.2.6" evidence="1"/>
<dbReference type="EMBL" id="CP000453">
    <property type="protein sequence ID" value="ABI57336.1"/>
    <property type="molecule type" value="Genomic_DNA"/>
</dbReference>
<dbReference type="RefSeq" id="WP_011629730.1">
    <property type="nucleotide sequence ID" value="NC_008340.1"/>
</dbReference>
<dbReference type="SMR" id="Q0A751"/>
<dbReference type="KEGG" id="aeh:Mlg_1994"/>
<dbReference type="eggNOG" id="COG0491">
    <property type="taxonomic scope" value="Bacteria"/>
</dbReference>
<dbReference type="HOGENOM" id="CLU_030571_4_1_6"/>
<dbReference type="OrthoDB" id="9802248at2"/>
<dbReference type="UniPathway" id="UPA00619">
    <property type="reaction ID" value="UER00676"/>
</dbReference>
<dbReference type="Proteomes" id="UP000001962">
    <property type="component" value="Chromosome"/>
</dbReference>
<dbReference type="GO" id="GO:0004416">
    <property type="term" value="F:hydroxyacylglutathione hydrolase activity"/>
    <property type="evidence" value="ECO:0007669"/>
    <property type="project" value="UniProtKB-UniRule"/>
</dbReference>
<dbReference type="GO" id="GO:0046872">
    <property type="term" value="F:metal ion binding"/>
    <property type="evidence" value="ECO:0007669"/>
    <property type="project" value="UniProtKB-KW"/>
</dbReference>
<dbReference type="GO" id="GO:0019243">
    <property type="term" value="P:methylglyoxal catabolic process to D-lactate via S-lactoyl-glutathione"/>
    <property type="evidence" value="ECO:0007669"/>
    <property type="project" value="InterPro"/>
</dbReference>
<dbReference type="CDD" id="cd07723">
    <property type="entry name" value="hydroxyacylglutathione_hydrolase_MBL-fold"/>
    <property type="match status" value="1"/>
</dbReference>
<dbReference type="Gene3D" id="3.60.15.10">
    <property type="entry name" value="Ribonuclease Z/Hydroxyacylglutathione hydrolase-like"/>
    <property type="match status" value="1"/>
</dbReference>
<dbReference type="HAMAP" id="MF_01374">
    <property type="entry name" value="Glyoxalase_2"/>
    <property type="match status" value="1"/>
</dbReference>
<dbReference type="InterPro" id="IPR035680">
    <property type="entry name" value="Clx_II_MBL"/>
</dbReference>
<dbReference type="InterPro" id="IPR050110">
    <property type="entry name" value="Glyoxalase_II_hydrolase"/>
</dbReference>
<dbReference type="InterPro" id="IPR032282">
    <property type="entry name" value="HAGH_C"/>
</dbReference>
<dbReference type="InterPro" id="IPR017782">
    <property type="entry name" value="Hydroxyacylglutathione_Hdrlase"/>
</dbReference>
<dbReference type="InterPro" id="IPR001279">
    <property type="entry name" value="Metallo-B-lactamas"/>
</dbReference>
<dbReference type="InterPro" id="IPR036866">
    <property type="entry name" value="RibonucZ/Hydroxyglut_hydro"/>
</dbReference>
<dbReference type="NCBIfam" id="TIGR03413">
    <property type="entry name" value="GSH_gloB"/>
    <property type="match status" value="1"/>
</dbReference>
<dbReference type="PANTHER" id="PTHR43705">
    <property type="entry name" value="HYDROXYACYLGLUTATHIONE HYDROLASE"/>
    <property type="match status" value="1"/>
</dbReference>
<dbReference type="PANTHER" id="PTHR43705:SF1">
    <property type="entry name" value="HYDROXYACYLGLUTATHIONE HYDROLASE GLOB"/>
    <property type="match status" value="1"/>
</dbReference>
<dbReference type="Pfam" id="PF16123">
    <property type="entry name" value="HAGH_C"/>
    <property type="match status" value="1"/>
</dbReference>
<dbReference type="Pfam" id="PF00753">
    <property type="entry name" value="Lactamase_B"/>
    <property type="match status" value="1"/>
</dbReference>
<dbReference type="PIRSF" id="PIRSF005457">
    <property type="entry name" value="Glx"/>
    <property type="match status" value="1"/>
</dbReference>
<dbReference type="SMART" id="SM00849">
    <property type="entry name" value="Lactamase_B"/>
    <property type="match status" value="1"/>
</dbReference>
<dbReference type="SUPFAM" id="SSF56281">
    <property type="entry name" value="Metallo-hydrolase/oxidoreductase"/>
    <property type="match status" value="1"/>
</dbReference>
<protein>
    <recommendedName>
        <fullName evidence="1">Hydroxyacylglutathione hydrolase</fullName>
        <ecNumber evidence="1">3.1.2.6</ecNumber>
    </recommendedName>
    <alternativeName>
        <fullName evidence="1">Glyoxalase II</fullName>
        <shortName evidence="1">Glx II</shortName>
    </alternativeName>
</protein>
<name>GLO2_ALKEH</name>
<sequence>MTEIVAIPAFADNYIWLAVDRNRRLAAVVDPGDAEPVEAALRASGLRLSAILITHHHHDHTGGVEELLAAHPVPVYGPADESVPGVSQPLREPDAFEVPGLGLPLRVLDVPGHTAGHIALVADGALFSGDALFAGGCGRLFEGTPEQMYASLGKLAALPEATRVYCGHEYTLANLRFAHQVEPDNPNLTQRLRQAEAARQRGEPTVPSRMADEHATNPFLRAHLPAVRTAAERWSGQTLDEPVAVFAALRRWKDQS</sequence>
<accession>Q0A751</accession>
<proteinExistence type="inferred from homology"/>
<reference key="1">
    <citation type="submission" date="2006-08" db="EMBL/GenBank/DDBJ databases">
        <title>Complete sequence of Alkalilimnicola ehrilichei MLHE-1.</title>
        <authorList>
            <person name="Copeland A."/>
            <person name="Lucas S."/>
            <person name="Lapidus A."/>
            <person name="Barry K."/>
            <person name="Detter J.C."/>
            <person name="Glavina del Rio T."/>
            <person name="Hammon N."/>
            <person name="Israni S."/>
            <person name="Dalin E."/>
            <person name="Tice H."/>
            <person name="Pitluck S."/>
            <person name="Sims D."/>
            <person name="Brettin T."/>
            <person name="Bruce D."/>
            <person name="Han C."/>
            <person name="Tapia R."/>
            <person name="Gilna P."/>
            <person name="Schmutz J."/>
            <person name="Larimer F."/>
            <person name="Land M."/>
            <person name="Hauser L."/>
            <person name="Kyrpides N."/>
            <person name="Mikhailova N."/>
            <person name="Oremland R.S."/>
            <person name="Hoeft S.E."/>
            <person name="Switzer-Blum J."/>
            <person name="Kulp T."/>
            <person name="King G."/>
            <person name="Tabita R."/>
            <person name="Witte B."/>
            <person name="Santini J.M."/>
            <person name="Basu P."/>
            <person name="Hollibaugh J.T."/>
            <person name="Xie G."/>
            <person name="Stolz J.F."/>
            <person name="Richardson P."/>
        </authorList>
    </citation>
    <scope>NUCLEOTIDE SEQUENCE [LARGE SCALE GENOMIC DNA]</scope>
    <source>
        <strain>ATCC BAA-1101 / DSM 17681 / MLHE-1</strain>
    </source>
</reference>
<evidence type="ECO:0000255" key="1">
    <source>
        <dbReference type="HAMAP-Rule" id="MF_01374"/>
    </source>
</evidence>
<keyword id="KW-0378">Hydrolase</keyword>
<keyword id="KW-0479">Metal-binding</keyword>
<keyword id="KW-1185">Reference proteome</keyword>
<keyword id="KW-0862">Zinc</keyword>
<feature type="chain" id="PRO_1000144750" description="Hydroxyacylglutathione hydrolase">
    <location>
        <begin position="1"/>
        <end position="256"/>
    </location>
</feature>
<feature type="binding site" evidence="1">
    <location>
        <position position="55"/>
    </location>
    <ligand>
        <name>Zn(2+)</name>
        <dbReference type="ChEBI" id="CHEBI:29105"/>
        <label>1</label>
    </ligand>
</feature>
<feature type="binding site" evidence="1">
    <location>
        <position position="57"/>
    </location>
    <ligand>
        <name>Zn(2+)</name>
        <dbReference type="ChEBI" id="CHEBI:29105"/>
        <label>1</label>
    </ligand>
</feature>
<feature type="binding site" evidence="1">
    <location>
        <position position="59"/>
    </location>
    <ligand>
        <name>Zn(2+)</name>
        <dbReference type="ChEBI" id="CHEBI:29105"/>
        <label>2</label>
    </ligand>
</feature>
<feature type="binding site" evidence="1">
    <location>
        <position position="60"/>
    </location>
    <ligand>
        <name>Zn(2+)</name>
        <dbReference type="ChEBI" id="CHEBI:29105"/>
        <label>2</label>
    </ligand>
</feature>
<feature type="binding site" evidence="1">
    <location>
        <position position="113"/>
    </location>
    <ligand>
        <name>Zn(2+)</name>
        <dbReference type="ChEBI" id="CHEBI:29105"/>
        <label>1</label>
    </ligand>
</feature>
<feature type="binding site" evidence="1">
    <location>
        <position position="130"/>
    </location>
    <ligand>
        <name>Zn(2+)</name>
        <dbReference type="ChEBI" id="CHEBI:29105"/>
        <label>1</label>
    </ligand>
</feature>
<feature type="binding site" evidence="1">
    <location>
        <position position="130"/>
    </location>
    <ligand>
        <name>Zn(2+)</name>
        <dbReference type="ChEBI" id="CHEBI:29105"/>
        <label>2</label>
    </ligand>
</feature>
<feature type="binding site" evidence="1">
    <location>
        <position position="168"/>
    </location>
    <ligand>
        <name>Zn(2+)</name>
        <dbReference type="ChEBI" id="CHEBI:29105"/>
        <label>2</label>
    </ligand>
</feature>